<evidence type="ECO:0000250" key="1"/>
<evidence type="ECO:0000255" key="2">
    <source>
        <dbReference type="PROSITE-ProRule" id="PRU00434"/>
    </source>
</evidence>
<evidence type="ECO:0000305" key="3"/>
<keyword id="KW-0067">ATP-binding</keyword>
<keyword id="KW-0963">Cytoplasm</keyword>
<keyword id="KW-0227">DNA damage</keyword>
<keyword id="KW-0228">DNA excision</keyword>
<keyword id="KW-0234">DNA repair</keyword>
<keyword id="KW-0238">DNA-binding</keyword>
<keyword id="KW-0267">Excision nuclease</keyword>
<keyword id="KW-0479">Metal-binding</keyword>
<keyword id="KW-0547">Nucleotide-binding</keyword>
<keyword id="KW-0677">Repeat</keyword>
<keyword id="KW-0742">SOS response</keyword>
<keyword id="KW-0862">Zinc</keyword>
<keyword id="KW-0863">Zinc-finger</keyword>
<sequence length="1826" mass="201696">MKSLPVYVSGIKVRNLKNVSIHFNSEEIVLLTGVSGSGKSSIAFDTLYAAGRKRYISTLPTFFATTITTLPNPKVEEIHGLSPTIAIKQNHFSHYSHATVGSTTELFSHLALLFTLEGQARDPKTKEVLDLYSKEKVLSTIMELSEGVQISILAPLLRKDIAAIHEYAQQGFTKVRCNGTIHPIYSFLTSGIPEDCSVDIVIDTLIKSENNIARLKVSLFTALEFGEGHCSVLSDEELMTFSTKQQIDDVTYTPLTQQLFSPHALESRCSLCQGSGIFISIDNPLLIDENLSIKENCCSFAGNCSSYLYHTIYQALADALNFNLETPWKDLSPEIQNIFLRGKNNLVLPVRLFDQTLGKKNLTYKVWRGVLNDIGDKVRYTTKPSRYLSKGMSAHSCSLCKGTGLGDYASVATWEGKTFTEFQQMSLNNWHVFFSKVKSPSLSIQEILQGLKQRLSFLIDLGLGYLTPNRALATLSGGEQERTAIAKHLGGELFGITYILDEPSIGLHPQDTEKLIGVIKKLRDQGNTVILVEHEERMISLADRIIDIGPGAGIFGGEVLFNGKPEDFLMNSSSLTAKYLRQELTIPIPESREAPTSWLLLTEATIHNLKNLSIRLPLARLIGVTGVSGSGKSSLINNTLVPAIESFLKQENPKNLHFEWGCIGRLIHITRDLPGRSQRSIPLTYIKAFDDIRELFASQPRSLRQGLTKAHFSFNQPQGACIQCQGLGTMTISDDDTPIPCSECQGKRYHSEVLEILYEGKNIADILDMTAYEAEKFFISHPKIHEKIHALCSLRLDYLPLGRPLSTLSGGEIQRLKLAHELLFASPKQTLYVLDEPTTGLHTHDIQALIEVLLSLTYLGHTVLVIEHNMHVVKVCDYVLELGPEGGDLGGYLLASCTPKDLIQLNTPTAKALAPYIEGSLDIPVVKSEPPSSPKSCDILIKDAYQNNLKHIDLALPRNSLIAIAGPGASGKHSLVFDILYASGNIAYAELFPPYIRQGLLKETPLPSVGEVKGLSPVISVRKCSSSNRSYHTIASALGLSNGLEKLFAILGEPFSPLTEEKLSKTTPQTIIDSLLKSYKDDYVTITSPIPLGSDLEIFLQEKQKEGFIKLYSEGNLYDLDERLPLNLIEPAIVIQHTKVSPKNSSSLLSAISVAFSLSSEIWIYISQKKQRKLSYSLGWKDKKGRLYPEITHQLLSSDHPEGRCLTCGGRGEILKISLEEHKEKIAHYTPLEFFSLFFPKSYMKPVQKLLKDENASQPLKLLTTKEFLNFCRGSSEFPGMNALLMEQLDTESDSPLIKPLLALTSCPACKGSGLNDYANYVRINNTSLLDIYQEDATFLESFLNTIGTDDTRSIIQDLMNRLTFISKVGLSYITLGQRQDTLSDGENYRLHLAKKISINLTNIVYLFEEPLSGLHPQDLPTIVQLLKELVANNNTVIATDRSCSLIPHADHAIFLGPGSGPQGGFLMDSDTEVCPSVDLHANVPQTEVCPKAPLSISKANHTRGSDRTLKVNLSIHHIQNLKVSAPLHALVAIGGVSGSGKTSLLLEGFKKQAELLIAKGTTTFSDLVVIDSHPIASSQRSDISTYFDIAPSLRAFYASLTQAKALNISSTMFSTNTKQGQCSDCQGLGYQWIDRAFYALEKRPCPTCSGFRIQPLAQEVLYEGKHFGELLHTPIETVALRFPFIKKIQKPLKALLDIGLGYLPIGQKLSSLSVSEKTALKTAYFLYQTPETPTLFLIDELFSSLDPIKKQHLPEKLRSLINSGHSVIYIDHDVKLLKSADYLIEIGPGSGKQGGKLLFSGSPKDIYASKDSLLKKYICNEELDS</sequence>
<name>UVRA_CHLPN</name>
<proteinExistence type="inferred from homology"/>
<reference key="1">
    <citation type="journal article" date="1999" name="Nat. Genet.">
        <title>Comparative genomes of Chlamydia pneumoniae and C. trachomatis.</title>
        <authorList>
            <person name="Kalman S."/>
            <person name="Mitchell W.P."/>
            <person name="Marathe R."/>
            <person name="Lammel C.J."/>
            <person name="Fan J."/>
            <person name="Hyman R.W."/>
            <person name="Olinger L."/>
            <person name="Grimwood J."/>
            <person name="Davis R.W."/>
            <person name="Stephens R.S."/>
        </authorList>
    </citation>
    <scope>NUCLEOTIDE SEQUENCE [LARGE SCALE GENOMIC DNA]</scope>
    <source>
        <strain>CWL029</strain>
    </source>
</reference>
<reference key="2">
    <citation type="journal article" date="2000" name="Nucleic Acids Res.">
        <title>Genome sequences of Chlamydia trachomatis MoPn and Chlamydia pneumoniae AR39.</title>
        <authorList>
            <person name="Read T.D."/>
            <person name="Brunham R.C."/>
            <person name="Shen C."/>
            <person name="Gill S.R."/>
            <person name="Heidelberg J.F."/>
            <person name="White O."/>
            <person name="Hickey E.K."/>
            <person name="Peterson J.D."/>
            <person name="Utterback T.R."/>
            <person name="Berry K.J."/>
            <person name="Bass S."/>
            <person name="Linher K.D."/>
            <person name="Weidman J.F."/>
            <person name="Khouri H.M."/>
            <person name="Craven B."/>
            <person name="Bowman C."/>
            <person name="Dodson R.J."/>
            <person name="Gwinn M.L."/>
            <person name="Nelson W.C."/>
            <person name="DeBoy R.T."/>
            <person name="Kolonay J.F."/>
            <person name="McClarty G."/>
            <person name="Salzberg S.L."/>
            <person name="Eisen J.A."/>
            <person name="Fraser C.M."/>
        </authorList>
    </citation>
    <scope>NUCLEOTIDE SEQUENCE [LARGE SCALE GENOMIC DNA]</scope>
    <source>
        <strain>AR39</strain>
    </source>
</reference>
<reference key="3">
    <citation type="journal article" date="2000" name="Nucleic Acids Res.">
        <title>Comparison of whole genome sequences of Chlamydia pneumoniae J138 from Japan and CWL029 from USA.</title>
        <authorList>
            <person name="Shirai M."/>
            <person name="Hirakawa H."/>
            <person name="Kimoto M."/>
            <person name="Tabuchi M."/>
            <person name="Kishi F."/>
            <person name="Ouchi K."/>
            <person name="Shiba T."/>
            <person name="Ishii K."/>
            <person name="Hattori M."/>
            <person name="Kuhara S."/>
            <person name="Nakazawa T."/>
        </authorList>
    </citation>
    <scope>NUCLEOTIDE SEQUENCE [LARGE SCALE GENOMIC DNA]</scope>
    <source>
        <strain>J138</strain>
    </source>
</reference>
<reference key="4">
    <citation type="submission" date="2002-05" db="EMBL/GenBank/DDBJ databases">
        <title>The genome sequence of Chlamydia pneumoniae TW183 and comparison with other Chlamydia strains based on whole genome sequence analysis.</title>
        <authorList>
            <person name="Geng M.M."/>
            <person name="Schuhmacher A."/>
            <person name="Muehldorfer I."/>
            <person name="Bensch K.W."/>
            <person name="Schaefer K.P."/>
            <person name="Schneider S."/>
            <person name="Pohl T."/>
            <person name="Essig A."/>
            <person name="Marre R."/>
            <person name="Melchers K."/>
        </authorList>
    </citation>
    <scope>NUCLEOTIDE SEQUENCE [LARGE SCALE GENOMIC DNA]</scope>
    <source>
        <strain>TW-183</strain>
    </source>
</reference>
<protein>
    <recommendedName>
        <fullName>UvrABC system protein A</fullName>
        <shortName>UvrA protein</shortName>
    </recommendedName>
    <alternativeName>
        <fullName>Excinuclease ABC subunit A</fullName>
    </alternativeName>
</protein>
<accession>Q9Z985</accession>
<accession>Q9JQK9</accession>
<accession>Q9JSJ5</accession>
<comment type="function">
    <text evidence="1">The UvrABC repair system catalyzes the recognition and processing of DNA lesions. UvrA is an ATPase and a DNA-binding protein. A damage recognition complex composed of 2 UvrA and 2 UvrB subunits scans DNA for abnormalities. When the presence of a lesion has been verified by UvrB, the UvrA molecules dissociate (By similarity).</text>
</comment>
<comment type="subunit">
    <text evidence="1">Forms a heterotetramer with UvrB during the search for lesions.</text>
</comment>
<comment type="subcellular location">
    <subcellularLocation>
        <location evidence="1">Cytoplasm</location>
    </subcellularLocation>
</comment>
<comment type="similarity">
    <text evidence="3">Belongs to the ABC transporter superfamily. UvrA family.</text>
</comment>
<dbReference type="EMBL" id="AE001363">
    <property type="protein sequence ID" value="AAD18249.1"/>
    <property type="molecule type" value="Genomic_DNA"/>
</dbReference>
<dbReference type="EMBL" id="AE002161">
    <property type="protein sequence ID" value="AAF38489.1"/>
    <property type="molecule type" value="Genomic_DNA"/>
</dbReference>
<dbReference type="EMBL" id="BA000008">
    <property type="protein sequence ID" value="BAA98306.1"/>
    <property type="molecule type" value="Genomic_DNA"/>
</dbReference>
<dbReference type="EMBL" id="AE009440">
    <property type="protein sequence ID" value="AAP98029.1"/>
    <property type="molecule type" value="Genomic_DNA"/>
</dbReference>
<dbReference type="PIR" id="D72120">
    <property type="entry name" value="D72120"/>
</dbReference>
<dbReference type="PIR" id="H86502">
    <property type="entry name" value="H86502"/>
</dbReference>
<dbReference type="RefSeq" id="NP_224304.1">
    <property type="nucleotide sequence ID" value="NC_000922.1"/>
</dbReference>
<dbReference type="RefSeq" id="WP_010882746.1">
    <property type="nucleotide sequence ID" value="NZ_LN847257.1"/>
</dbReference>
<dbReference type="SMR" id="Q9Z985"/>
<dbReference type="STRING" id="406984.CPK_ORF00606"/>
<dbReference type="GeneID" id="45050141"/>
<dbReference type="KEGG" id="cpa:CP_0678"/>
<dbReference type="KEGG" id="cpj:uvrA"/>
<dbReference type="KEGG" id="cpn:CPn_0096"/>
<dbReference type="KEGG" id="cpt:CpB0096"/>
<dbReference type="PATRIC" id="fig|115713.3.peg.109"/>
<dbReference type="eggNOG" id="COG0178">
    <property type="taxonomic scope" value="Bacteria"/>
</dbReference>
<dbReference type="HOGENOM" id="CLU_001370_3_1_0"/>
<dbReference type="OrthoDB" id="9809851at2"/>
<dbReference type="Proteomes" id="UP000000583">
    <property type="component" value="Chromosome"/>
</dbReference>
<dbReference type="Proteomes" id="UP000000801">
    <property type="component" value="Chromosome"/>
</dbReference>
<dbReference type="GO" id="GO:0005737">
    <property type="term" value="C:cytoplasm"/>
    <property type="evidence" value="ECO:0007669"/>
    <property type="project" value="UniProtKB-SubCell"/>
</dbReference>
<dbReference type="GO" id="GO:0009380">
    <property type="term" value="C:excinuclease repair complex"/>
    <property type="evidence" value="ECO:0007669"/>
    <property type="project" value="InterPro"/>
</dbReference>
<dbReference type="GO" id="GO:0005524">
    <property type="term" value="F:ATP binding"/>
    <property type="evidence" value="ECO:0007669"/>
    <property type="project" value="UniProtKB-KW"/>
</dbReference>
<dbReference type="GO" id="GO:0016887">
    <property type="term" value="F:ATP hydrolysis activity"/>
    <property type="evidence" value="ECO:0007669"/>
    <property type="project" value="InterPro"/>
</dbReference>
<dbReference type="GO" id="GO:0003677">
    <property type="term" value="F:DNA binding"/>
    <property type="evidence" value="ECO:0007669"/>
    <property type="project" value="UniProtKB-KW"/>
</dbReference>
<dbReference type="GO" id="GO:0004518">
    <property type="term" value="F:nuclease activity"/>
    <property type="evidence" value="ECO:0007669"/>
    <property type="project" value="UniProtKB-KW"/>
</dbReference>
<dbReference type="GO" id="GO:0008270">
    <property type="term" value="F:zinc ion binding"/>
    <property type="evidence" value="ECO:0007669"/>
    <property type="project" value="UniProtKB-KW"/>
</dbReference>
<dbReference type="GO" id="GO:0006289">
    <property type="term" value="P:nucleotide-excision repair"/>
    <property type="evidence" value="ECO:0007669"/>
    <property type="project" value="InterPro"/>
</dbReference>
<dbReference type="GO" id="GO:0009432">
    <property type="term" value="P:SOS response"/>
    <property type="evidence" value="ECO:0007669"/>
    <property type="project" value="UniProtKB-KW"/>
</dbReference>
<dbReference type="CDD" id="cd03238">
    <property type="entry name" value="ABC_UvrA"/>
    <property type="match status" value="1"/>
</dbReference>
<dbReference type="CDD" id="cd03271">
    <property type="entry name" value="ABC_UvrA_II"/>
    <property type="match status" value="1"/>
</dbReference>
<dbReference type="Gene3D" id="3.30.190.20">
    <property type="match status" value="1"/>
</dbReference>
<dbReference type="Gene3D" id="1.10.8.280">
    <property type="entry name" value="ABC transporter ATPase domain-like"/>
    <property type="match status" value="1"/>
</dbReference>
<dbReference type="Gene3D" id="1.20.1580.10">
    <property type="entry name" value="ABC transporter ATPase like domain"/>
    <property type="match status" value="3"/>
</dbReference>
<dbReference type="Gene3D" id="3.30.1490.20">
    <property type="entry name" value="ATP-grasp fold, A domain"/>
    <property type="match status" value="1"/>
</dbReference>
<dbReference type="Gene3D" id="3.40.50.300">
    <property type="entry name" value="P-loop containing nucleotide triphosphate hydrolases"/>
    <property type="match status" value="5"/>
</dbReference>
<dbReference type="InterPro" id="IPR003439">
    <property type="entry name" value="ABC_transporter-like_ATP-bd"/>
</dbReference>
<dbReference type="InterPro" id="IPR013815">
    <property type="entry name" value="ATP_grasp_subdomain_1"/>
</dbReference>
<dbReference type="InterPro" id="IPR027417">
    <property type="entry name" value="P-loop_NTPase"/>
</dbReference>
<dbReference type="InterPro" id="IPR004602">
    <property type="entry name" value="UvrA"/>
</dbReference>
<dbReference type="InterPro" id="IPR041552">
    <property type="entry name" value="UvrA_DNA-bd"/>
</dbReference>
<dbReference type="InterPro" id="IPR041102">
    <property type="entry name" value="UvrA_inter"/>
</dbReference>
<dbReference type="NCBIfam" id="NF001885">
    <property type="entry name" value="PRK00635.1"/>
    <property type="match status" value="1"/>
</dbReference>
<dbReference type="NCBIfam" id="TIGR00630">
    <property type="entry name" value="uvra"/>
    <property type="match status" value="1"/>
</dbReference>
<dbReference type="PANTHER" id="PTHR43152">
    <property type="entry name" value="UVRABC SYSTEM PROTEIN A"/>
    <property type="match status" value="1"/>
</dbReference>
<dbReference type="PANTHER" id="PTHR43152:SF3">
    <property type="entry name" value="UVRABC SYSTEM PROTEIN A"/>
    <property type="match status" value="1"/>
</dbReference>
<dbReference type="Pfam" id="PF17755">
    <property type="entry name" value="UvrA_DNA-bind"/>
    <property type="match status" value="1"/>
</dbReference>
<dbReference type="Pfam" id="PF17760">
    <property type="entry name" value="UvrA_inter"/>
    <property type="match status" value="2"/>
</dbReference>
<dbReference type="SUPFAM" id="SSF52540">
    <property type="entry name" value="P-loop containing nucleoside triphosphate hydrolases"/>
    <property type="match status" value="4"/>
</dbReference>
<dbReference type="PROSITE" id="PS50893">
    <property type="entry name" value="ABC_TRANSPORTER_2"/>
    <property type="match status" value="1"/>
</dbReference>
<organism>
    <name type="scientific">Chlamydia pneumoniae</name>
    <name type="common">Chlamydophila pneumoniae</name>
    <dbReference type="NCBI Taxonomy" id="83558"/>
    <lineage>
        <taxon>Bacteria</taxon>
        <taxon>Pseudomonadati</taxon>
        <taxon>Chlamydiota</taxon>
        <taxon>Chlamydiia</taxon>
        <taxon>Chlamydiales</taxon>
        <taxon>Chlamydiaceae</taxon>
        <taxon>Chlamydia/Chlamydophila group</taxon>
        <taxon>Chlamydia</taxon>
    </lineage>
</organism>
<feature type="chain" id="PRO_0000093043" description="UvrABC system protein A">
    <location>
        <begin position="1"/>
        <end position="1826"/>
    </location>
</feature>
<feature type="domain" description="ABC transporter 1" evidence="2">
    <location>
        <begin position="1"/>
        <end position="581"/>
    </location>
</feature>
<feature type="domain" description="ABC transporter 2" evidence="2">
    <location>
        <begin position="594"/>
        <end position="909"/>
    </location>
</feature>
<feature type="domain" description="ABC transporter 3" evidence="2">
    <location>
        <begin position="1503"/>
        <end position="1814"/>
    </location>
</feature>
<feature type="zinc finger region" description="C4-type">
    <location>
        <begin position="721"/>
        <end position="744"/>
    </location>
</feature>
<feature type="zinc finger region" description="C4-type">
    <location>
        <begin position="1623"/>
        <end position="1649"/>
    </location>
</feature>
<feature type="binding site" evidence="2">
    <location>
        <begin position="33"/>
        <end position="40"/>
    </location>
    <ligand>
        <name>ATP</name>
        <dbReference type="ChEBI" id="CHEBI:30616"/>
        <label>1</label>
    </ligand>
</feature>
<feature type="binding site" evidence="2">
    <location>
        <begin position="626"/>
        <end position="633"/>
    </location>
    <ligand>
        <name>ATP</name>
        <dbReference type="ChEBI" id="CHEBI:30616"/>
        <label>2</label>
    </ligand>
</feature>
<feature type="binding site" evidence="2">
    <location>
        <begin position="966"/>
        <end position="973"/>
    </location>
    <ligand>
        <name>ATP</name>
        <dbReference type="ChEBI" id="CHEBI:30616"/>
        <label>3</label>
    </ligand>
</feature>
<feature type="binding site" evidence="2">
    <location>
        <begin position="1536"/>
        <end position="1543"/>
    </location>
    <ligand>
        <name>ATP</name>
        <dbReference type="ChEBI" id="CHEBI:30616"/>
        <label>4</label>
    </ligand>
</feature>
<feature type="sequence conflict" description="In Ref. 3; BAA98306." evidence="3" ref="3">
    <original>V</original>
    <variation>G</variation>
    <location>
        <position position="559"/>
    </location>
</feature>
<feature type="sequence conflict" description="In Ref. 3; BAA98306." evidence="3" ref="3">
    <original>K</original>
    <variation>E</variation>
    <location>
        <position position="1046"/>
    </location>
</feature>
<feature type="sequence conflict" description="In Ref. 3; BAA98306." evidence="3" ref="3">
    <original>TTPQTIIDSLLKSYKDDYVTI</original>
    <variation>IHLRPSSIATQSYNDELTSLL</variation>
    <location>
        <begin position="1066"/>
        <end position="1086"/>
    </location>
</feature>
<feature type="sequence conflict" description="In Ref. 3; BAA98306." evidence="3" ref="3">
    <original>S</original>
    <variation>A</variation>
    <location>
        <position position="1094"/>
    </location>
</feature>
<gene>
    <name type="primary">uvrA</name>
    <name type="ordered locus">CPn_0096</name>
    <name type="ordered locus">CP_0678</name>
    <name type="ordered locus">CpB0096</name>
</gene>